<protein>
    <recommendedName>
        <fullName evidence="1">Methylenetetrahydrofolate--tRNA-(uracil-5-)-methyltransferase TrmFO</fullName>
        <ecNumber evidence="1">2.1.1.74</ecNumber>
    </recommendedName>
    <alternativeName>
        <fullName evidence="1">Folate-dependent tRNA (uracil-5-)-methyltransferase</fullName>
    </alternativeName>
    <alternativeName>
        <fullName evidence="1">Folate-dependent tRNA(M-5-U54)-methyltransferase</fullName>
    </alternativeName>
</protein>
<gene>
    <name evidence="1" type="primary">trmFO</name>
    <name type="ordered locus">Gbem_2710</name>
</gene>
<name>TRMFO_CITBB</name>
<dbReference type="EC" id="2.1.1.74" evidence="1"/>
<dbReference type="EMBL" id="CP001124">
    <property type="protein sequence ID" value="ACH39714.1"/>
    <property type="molecule type" value="Genomic_DNA"/>
</dbReference>
<dbReference type="RefSeq" id="WP_012531140.1">
    <property type="nucleotide sequence ID" value="NC_011146.1"/>
</dbReference>
<dbReference type="SMR" id="B5EHR5"/>
<dbReference type="STRING" id="404380.Gbem_2710"/>
<dbReference type="KEGG" id="gbm:Gbem_2710"/>
<dbReference type="eggNOG" id="COG1206">
    <property type="taxonomic scope" value="Bacteria"/>
</dbReference>
<dbReference type="HOGENOM" id="CLU_033057_1_0_7"/>
<dbReference type="OrthoDB" id="9803114at2"/>
<dbReference type="Proteomes" id="UP000008825">
    <property type="component" value="Chromosome"/>
</dbReference>
<dbReference type="GO" id="GO:0005829">
    <property type="term" value="C:cytosol"/>
    <property type="evidence" value="ECO:0007669"/>
    <property type="project" value="TreeGrafter"/>
</dbReference>
<dbReference type="GO" id="GO:0050660">
    <property type="term" value="F:flavin adenine dinucleotide binding"/>
    <property type="evidence" value="ECO:0007669"/>
    <property type="project" value="UniProtKB-UniRule"/>
</dbReference>
<dbReference type="GO" id="GO:0047151">
    <property type="term" value="F:tRNA (uracil(54)-C5)-methyltransferase activity, 5,10-methylenetetrahydrofolate-dependent"/>
    <property type="evidence" value="ECO:0007669"/>
    <property type="project" value="UniProtKB-UniRule"/>
</dbReference>
<dbReference type="GO" id="GO:0030488">
    <property type="term" value="P:tRNA methylation"/>
    <property type="evidence" value="ECO:0007669"/>
    <property type="project" value="TreeGrafter"/>
</dbReference>
<dbReference type="GO" id="GO:0002098">
    <property type="term" value="P:tRNA wobble uridine modification"/>
    <property type="evidence" value="ECO:0007669"/>
    <property type="project" value="TreeGrafter"/>
</dbReference>
<dbReference type="Gene3D" id="3.50.50.60">
    <property type="entry name" value="FAD/NAD(P)-binding domain"/>
    <property type="match status" value="2"/>
</dbReference>
<dbReference type="HAMAP" id="MF_01037">
    <property type="entry name" value="TrmFO"/>
    <property type="match status" value="1"/>
</dbReference>
<dbReference type="InterPro" id="IPR036188">
    <property type="entry name" value="FAD/NAD-bd_sf"/>
</dbReference>
<dbReference type="InterPro" id="IPR002218">
    <property type="entry name" value="MnmG-rel"/>
</dbReference>
<dbReference type="InterPro" id="IPR020595">
    <property type="entry name" value="MnmG-rel_CS"/>
</dbReference>
<dbReference type="InterPro" id="IPR040131">
    <property type="entry name" value="MnmG_N"/>
</dbReference>
<dbReference type="InterPro" id="IPR004417">
    <property type="entry name" value="TrmFO"/>
</dbReference>
<dbReference type="NCBIfam" id="TIGR00137">
    <property type="entry name" value="gid_trmFO"/>
    <property type="match status" value="1"/>
</dbReference>
<dbReference type="NCBIfam" id="NF003739">
    <property type="entry name" value="PRK05335.1"/>
    <property type="match status" value="1"/>
</dbReference>
<dbReference type="PANTHER" id="PTHR11806">
    <property type="entry name" value="GLUCOSE INHIBITED DIVISION PROTEIN A"/>
    <property type="match status" value="1"/>
</dbReference>
<dbReference type="PANTHER" id="PTHR11806:SF2">
    <property type="entry name" value="METHYLENETETRAHYDROFOLATE--TRNA-(URACIL-5-)-METHYLTRANSFERASE TRMFO"/>
    <property type="match status" value="1"/>
</dbReference>
<dbReference type="Pfam" id="PF01134">
    <property type="entry name" value="GIDA"/>
    <property type="match status" value="1"/>
</dbReference>
<dbReference type="SUPFAM" id="SSF51905">
    <property type="entry name" value="FAD/NAD(P)-binding domain"/>
    <property type="match status" value="1"/>
</dbReference>
<dbReference type="PROSITE" id="PS01281">
    <property type="entry name" value="GIDA_2"/>
    <property type="match status" value="1"/>
</dbReference>
<feature type="chain" id="PRO_1000213382" description="Methylenetetrahydrofolate--tRNA-(uracil-5-)-methyltransferase TrmFO">
    <location>
        <begin position="1"/>
        <end position="435"/>
    </location>
</feature>
<feature type="binding site" evidence="1">
    <location>
        <begin position="9"/>
        <end position="14"/>
    </location>
    <ligand>
        <name>FAD</name>
        <dbReference type="ChEBI" id="CHEBI:57692"/>
    </ligand>
</feature>
<proteinExistence type="inferred from homology"/>
<accession>B5EHR5</accession>
<organism>
    <name type="scientific">Citrifermentans bemidjiense (strain ATCC BAA-1014 / DSM 16622 / JCM 12645 / Bem)</name>
    <name type="common">Geobacter bemidjiensis</name>
    <dbReference type="NCBI Taxonomy" id="404380"/>
    <lineage>
        <taxon>Bacteria</taxon>
        <taxon>Pseudomonadati</taxon>
        <taxon>Thermodesulfobacteriota</taxon>
        <taxon>Desulfuromonadia</taxon>
        <taxon>Geobacterales</taxon>
        <taxon>Geobacteraceae</taxon>
        <taxon>Citrifermentans</taxon>
    </lineage>
</organism>
<sequence length="435" mass="47840">MTQEITVIGGGLAGCEAAWQAAKRGVKVRLFEMKPNCYSEAHHLPGLSELVCSNSLRGDSLENAVGLLKEELRRLQSLFMEGAEATKVPAGGALAVDRDLFSQYITSRIESHPLIEVVREEVTRIPEEGIVVLASGPLTSGLLAEEIGRLAGSYLYFYDAIAPIVAADSIDYDKAFRASRYGKGDGDDYLNCPMDEEQYQAFVREIVAAEKVEPKSFEKVVHFEGCMPIEEMASRGPETLRFGPMKPVGLVDPRVGVEPHAVIQLRQENREATMYNLVGFQTKLTWPEQKRIFRMIPGLENAQFLRLGSMHRNTFINAPELLMATCQLKSDQRIFFAGQITGVEGYVESASSGFVAGVNAARLAQGEGLVVPPAETAIGALARHITNTEAGHFQPMNVNYGLFPSLPGRVKKKEKRGLLAQRGLETLEKWLPELS</sequence>
<keyword id="KW-0963">Cytoplasm</keyword>
<keyword id="KW-0274">FAD</keyword>
<keyword id="KW-0285">Flavoprotein</keyword>
<keyword id="KW-0489">Methyltransferase</keyword>
<keyword id="KW-0520">NAD</keyword>
<keyword id="KW-0521">NADP</keyword>
<keyword id="KW-1185">Reference proteome</keyword>
<keyword id="KW-0808">Transferase</keyword>
<keyword id="KW-0819">tRNA processing</keyword>
<reference key="1">
    <citation type="submission" date="2008-07" db="EMBL/GenBank/DDBJ databases">
        <title>Complete sequence of Geobacter bemidjiensis BEM.</title>
        <authorList>
            <consortium name="US DOE Joint Genome Institute"/>
            <person name="Lucas S."/>
            <person name="Copeland A."/>
            <person name="Lapidus A."/>
            <person name="Glavina del Rio T."/>
            <person name="Dalin E."/>
            <person name="Tice H."/>
            <person name="Bruce D."/>
            <person name="Goodwin L."/>
            <person name="Pitluck S."/>
            <person name="Kiss H."/>
            <person name="Brettin T."/>
            <person name="Detter J.C."/>
            <person name="Han C."/>
            <person name="Kuske C.R."/>
            <person name="Schmutz J."/>
            <person name="Larimer F."/>
            <person name="Land M."/>
            <person name="Hauser L."/>
            <person name="Kyrpides N."/>
            <person name="Lykidis A."/>
            <person name="Lovley D."/>
            <person name="Richardson P."/>
        </authorList>
    </citation>
    <scope>NUCLEOTIDE SEQUENCE [LARGE SCALE GENOMIC DNA]</scope>
    <source>
        <strain>ATCC BAA-1014 / DSM 16622 / JCM 12645 / Bem</strain>
    </source>
</reference>
<comment type="function">
    <text evidence="1">Catalyzes the folate-dependent formation of 5-methyl-uridine at position 54 (M-5-U54) in all tRNAs.</text>
</comment>
<comment type="catalytic activity">
    <reaction evidence="1">
        <text>uridine(54) in tRNA + (6R)-5,10-methylene-5,6,7,8-tetrahydrofolate + NADH + H(+) = 5-methyluridine(54) in tRNA + (6S)-5,6,7,8-tetrahydrofolate + NAD(+)</text>
        <dbReference type="Rhea" id="RHEA:16873"/>
        <dbReference type="Rhea" id="RHEA-COMP:10167"/>
        <dbReference type="Rhea" id="RHEA-COMP:10193"/>
        <dbReference type="ChEBI" id="CHEBI:15378"/>
        <dbReference type="ChEBI" id="CHEBI:15636"/>
        <dbReference type="ChEBI" id="CHEBI:57453"/>
        <dbReference type="ChEBI" id="CHEBI:57540"/>
        <dbReference type="ChEBI" id="CHEBI:57945"/>
        <dbReference type="ChEBI" id="CHEBI:65315"/>
        <dbReference type="ChEBI" id="CHEBI:74447"/>
        <dbReference type="EC" id="2.1.1.74"/>
    </reaction>
</comment>
<comment type="catalytic activity">
    <reaction evidence="1">
        <text>uridine(54) in tRNA + (6R)-5,10-methylene-5,6,7,8-tetrahydrofolate + NADPH + H(+) = 5-methyluridine(54) in tRNA + (6S)-5,6,7,8-tetrahydrofolate + NADP(+)</text>
        <dbReference type="Rhea" id="RHEA:62372"/>
        <dbReference type="Rhea" id="RHEA-COMP:10167"/>
        <dbReference type="Rhea" id="RHEA-COMP:10193"/>
        <dbReference type="ChEBI" id="CHEBI:15378"/>
        <dbReference type="ChEBI" id="CHEBI:15636"/>
        <dbReference type="ChEBI" id="CHEBI:57453"/>
        <dbReference type="ChEBI" id="CHEBI:57783"/>
        <dbReference type="ChEBI" id="CHEBI:58349"/>
        <dbReference type="ChEBI" id="CHEBI:65315"/>
        <dbReference type="ChEBI" id="CHEBI:74447"/>
        <dbReference type="EC" id="2.1.1.74"/>
    </reaction>
</comment>
<comment type="cofactor">
    <cofactor evidence="1">
        <name>FAD</name>
        <dbReference type="ChEBI" id="CHEBI:57692"/>
    </cofactor>
</comment>
<comment type="subcellular location">
    <subcellularLocation>
        <location evidence="1">Cytoplasm</location>
    </subcellularLocation>
</comment>
<comment type="similarity">
    <text evidence="1">Belongs to the MnmG family. TrmFO subfamily.</text>
</comment>
<evidence type="ECO:0000255" key="1">
    <source>
        <dbReference type="HAMAP-Rule" id="MF_01037"/>
    </source>
</evidence>